<accession>Q2NI00</accession>
<feature type="chain" id="PRO_0000372054" description="3-dehydroquinate synthase">
    <location>
        <begin position="1"/>
        <end position="359"/>
    </location>
</feature>
<sequence>MKFAWIRPNGTWNDRKEAIVDSLESGFDHIMDLDNAETIKKLGSVTIISDKEDSDITLLGLNNKITMADIKKAQESGKEVAAYVEINNKDDELLVSKLGTVADYVILKGKNWKVIPLENIIASLQNRTSKIIVDVPNYEEAKLALETMEHGSDGVLLSSNDGNEIRKLGALIEKVSKESYDLKAATVTKVESVGIGDRVCVDTCSMMNVGDGMLVGSFASGLFLVHSETLESEYVASRPFRVNAGPVHAYVMTPENKTRYLSELEAGDEVVTLNSKGEANTVIVGRVKIEKRPLLLIEAKYKNSRIRTLVQNAETIRLVNDKGEPISVSKLKVGDKVLAYFSEAARHFGMAIEEQIIEK</sequence>
<comment type="function">
    <text evidence="1">Catalyzes the oxidative deamination and cyclization of 2-amino-3,7-dideoxy-D-threo-hept-6-ulosonic acid (ADH) to yield 3-dehydroquinate (DHQ), which is fed into the canonical shikimic pathway of aromatic amino acid biosynthesis.</text>
</comment>
<comment type="catalytic activity">
    <reaction evidence="1">
        <text>2-amino-2,3,7-trideoxy-D-lyxo-hept-6-ulosonate + NAD(+) + H2O = 3-dehydroquinate + NH4(+) + NADH + H(+)</text>
        <dbReference type="Rhea" id="RHEA:25956"/>
        <dbReference type="ChEBI" id="CHEBI:15377"/>
        <dbReference type="ChEBI" id="CHEBI:15378"/>
        <dbReference type="ChEBI" id="CHEBI:28938"/>
        <dbReference type="ChEBI" id="CHEBI:32364"/>
        <dbReference type="ChEBI" id="CHEBI:57540"/>
        <dbReference type="ChEBI" id="CHEBI:57945"/>
        <dbReference type="ChEBI" id="CHEBI:58859"/>
        <dbReference type="EC" id="1.4.1.24"/>
    </reaction>
</comment>
<comment type="similarity">
    <text evidence="1">Belongs to the archaeal-type DHQ synthase family.</text>
</comment>
<gene>
    <name evidence="1" type="primary">aroB'</name>
    <name type="ordered locus">Msp_0090</name>
</gene>
<name>DHQS_METST</name>
<protein>
    <recommendedName>
        <fullName evidence="1">3-dehydroquinate synthase</fullName>
        <shortName evidence="1">DHQ synthase</shortName>
        <ecNumber evidence="1">1.4.1.24</ecNumber>
    </recommendedName>
    <alternativeName>
        <fullName evidence="1">3-dehydroquinate synthase II</fullName>
    </alternativeName>
</protein>
<evidence type="ECO:0000255" key="1">
    <source>
        <dbReference type="HAMAP-Rule" id="MF_01244"/>
    </source>
</evidence>
<dbReference type="EC" id="1.4.1.24" evidence="1"/>
<dbReference type="EMBL" id="CP000102">
    <property type="protein sequence ID" value="ABC56509.1"/>
    <property type="molecule type" value="Genomic_DNA"/>
</dbReference>
<dbReference type="RefSeq" id="WP_011405708.1">
    <property type="nucleotide sequence ID" value="NC_007681.1"/>
</dbReference>
<dbReference type="STRING" id="339860.Msp_0090"/>
<dbReference type="KEGG" id="mst:Msp_0090"/>
<dbReference type="eggNOG" id="arCOG04353">
    <property type="taxonomic scope" value="Archaea"/>
</dbReference>
<dbReference type="HOGENOM" id="CLU_056379_0_0_2"/>
<dbReference type="OrthoDB" id="10265at2157"/>
<dbReference type="Proteomes" id="UP000001931">
    <property type="component" value="Chromosome"/>
</dbReference>
<dbReference type="GO" id="GO:0003856">
    <property type="term" value="F:3-dehydroquinate synthase activity"/>
    <property type="evidence" value="ECO:0007669"/>
    <property type="project" value="InterPro"/>
</dbReference>
<dbReference type="GO" id="GO:0102042">
    <property type="term" value="F:dehydroquinate synthase activity"/>
    <property type="evidence" value="ECO:0007669"/>
    <property type="project" value="UniProtKB-EC"/>
</dbReference>
<dbReference type="GO" id="GO:0051287">
    <property type="term" value="F:NAD binding"/>
    <property type="evidence" value="ECO:0007669"/>
    <property type="project" value="UniProtKB-UniRule"/>
</dbReference>
<dbReference type="GO" id="GO:0008652">
    <property type="term" value="P:amino acid biosynthetic process"/>
    <property type="evidence" value="ECO:0007669"/>
    <property type="project" value="UniProtKB-KW"/>
</dbReference>
<dbReference type="GO" id="GO:0009073">
    <property type="term" value="P:aromatic amino acid family biosynthetic process"/>
    <property type="evidence" value="ECO:0007669"/>
    <property type="project" value="UniProtKB-UniRule"/>
</dbReference>
<dbReference type="HAMAP" id="MF_01244">
    <property type="entry name" value="Arch_DHQ_synthase"/>
    <property type="match status" value="1"/>
</dbReference>
<dbReference type="InterPro" id="IPR002812">
    <property type="entry name" value="DHQ_synth"/>
</dbReference>
<dbReference type="NCBIfam" id="NF002626">
    <property type="entry name" value="PRK02290.1-4"/>
    <property type="match status" value="1"/>
</dbReference>
<dbReference type="PANTHER" id="PTHR33563">
    <property type="match status" value="1"/>
</dbReference>
<dbReference type="PANTHER" id="PTHR33563:SF1">
    <property type="entry name" value="3-DEHYDROQUINATE SYNTHASE"/>
    <property type="match status" value="1"/>
</dbReference>
<dbReference type="Pfam" id="PF01959">
    <property type="entry name" value="DHQS"/>
    <property type="match status" value="1"/>
</dbReference>
<dbReference type="PIRSF" id="PIRSF006655">
    <property type="entry name" value="DHQ_synth"/>
    <property type="match status" value="1"/>
</dbReference>
<proteinExistence type="inferred from homology"/>
<reference key="1">
    <citation type="journal article" date="2006" name="J. Bacteriol.">
        <title>The genome sequence of Methanosphaera stadtmanae reveals why this human intestinal archaeon is restricted to methanol and H2 for methane formation and ATP synthesis.</title>
        <authorList>
            <person name="Fricke W.F."/>
            <person name="Seedorf H."/>
            <person name="Henne A."/>
            <person name="Kruer M."/>
            <person name="Liesegang H."/>
            <person name="Hedderich R."/>
            <person name="Gottschalk G."/>
            <person name="Thauer R.K."/>
        </authorList>
    </citation>
    <scope>NUCLEOTIDE SEQUENCE [LARGE SCALE GENOMIC DNA]</scope>
    <source>
        <strain>ATCC 43021 / DSM 3091 / JCM 11832 / MCB-3</strain>
    </source>
</reference>
<organism>
    <name type="scientific">Methanosphaera stadtmanae (strain ATCC 43021 / DSM 3091 / JCM 11832 / MCB-3)</name>
    <dbReference type="NCBI Taxonomy" id="339860"/>
    <lineage>
        <taxon>Archaea</taxon>
        <taxon>Methanobacteriati</taxon>
        <taxon>Methanobacteriota</taxon>
        <taxon>Methanomada group</taxon>
        <taxon>Methanobacteria</taxon>
        <taxon>Methanobacteriales</taxon>
        <taxon>Methanobacteriaceae</taxon>
        <taxon>Methanosphaera</taxon>
    </lineage>
</organism>
<keyword id="KW-0028">Amino-acid biosynthesis</keyword>
<keyword id="KW-0057">Aromatic amino acid biosynthesis</keyword>
<keyword id="KW-0520">NAD</keyword>
<keyword id="KW-0560">Oxidoreductase</keyword>
<keyword id="KW-1185">Reference proteome</keyword>